<sequence length="924" mass="104944">MNRRDFIKNTAIASAASVAGLSVPSSMLGAQEEDWKWDKAVCRFCGTGCGIMIARKDGKIVATKGDPAAPVNRGLNCIKGYFNAKIMYGEDRLVMPLLRMNEKGEFDKKGKFQQVSWQRAFDEMEKQFKKAYNELGVTGIGIFGSGQYTIQEGYAALKLAKAGFRTNNIDPNARHCMASAVVGFMQTFGVDEPSGCYDDIELTDTIITWGANMAEMHPILWSRVSDRKLSNLDKVKVVNLSTFSNRTSNIADIEIIFKPNTDLAIWNYIAREIVYNHPEAMDMKFIKDHCVFATGYADIGYGMRNNPNHPKFKESEKDTVEKENVITLDDEEATSLSYLGVKAGDKFEMKHQGVADKNWEISFDEFKKGLAPYTLEYTARVAKGDDNESLEDFKKKLQELANLYIEKNRKVVSFWTMGFNQHTRGSWVNEQAYMVHFLLGKQAKPGSGAFSLTGQPSACGTAREVGTFSHRLPADMVVANPKHREISEKIWKVPAKTINPKPGSPYLNIMRDLEDGKIKFAWVQVNNPWQNTANANHWIAAAREMDNFIVVSDCYPGISAKVADLILPSAMIYEKWGAYGNAERRTQHWKQQVLPVGAAMSDTWQILEFAKRFKLKEVWKEQKVDNKLTLPSVLEEAKAMGYSEDDTLFDVLFANKEAKSFNPNDAIAKGFDNTDVKGDERKIQGSDGKEFTGYGFFVQKYLWEEYRKFGLGHGHDLADFDTYHKVRGLRWPVVNGKETQWRFNTKFDYYAKKAAPNSDFAFYGDFNKMLTNGDLIAPKDEKEHSIKNKAKIFFRPFMKAPERPSKEYPFWLATGRVLEHWHSGTMTMRVPELYRAVPEALCYMSEKDGEKLGLNQGDLVWVESRRGKVKARVDMRGRNKPPVGLVYVPWFDENVYINKVTLDATCPLSKQTDFKKCAVKIYKA</sequence>
<proteinExistence type="inferred from homology"/>
<dbReference type="EC" id="1.9.6.1" evidence="1"/>
<dbReference type="EMBL" id="AL111168">
    <property type="protein sequence ID" value="CAL34908.1"/>
    <property type="molecule type" value="Genomic_DNA"/>
</dbReference>
<dbReference type="PIR" id="D81349">
    <property type="entry name" value="D81349"/>
</dbReference>
<dbReference type="RefSeq" id="WP_002852404.1">
    <property type="nucleotide sequence ID" value="NZ_SZUC01000001.1"/>
</dbReference>
<dbReference type="RefSeq" id="YP_002344187.1">
    <property type="nucleotide sequence ID" value="NC_002163.1"/>
</dbReference>
<dbReference type="SMR" id="Q9PPD9"/>
<dbReference type="IntAct" id="Q9PPD9">
    <property type="interactions" value="3"/>
</dbReference>
<dbReference type="STRING" id="192222.Cj0780"/>
<dbReference type="PaxDb" id="192222-Cj0780"/>
<dbReference type="EnsemblBacteria" id="CAL34908">
    <property type="protein sequence ID" value="CAL34908"/>
    <property type="gene ID" value="Cj0780"/>
</dbReference>
<dbReference type="GeneID" id="905089"/>
<dbReference type="KEGG" id="cje:Cj0780"/>
<dbReference type="PATRIC" id="fig|192222.6.peg.768"/>
<dbReference type="eggNOG" id="COG0243">
    <property type="taxonomic scope" value="Bacteria"/>
</dbReference>
<dbReference type="HOGENOM" id="CLU_000422_13_4_7"/>
<dbReference type="OrthoDB" id="7376058at2"/>
<dbReference type="BRENDA" id="1.9.6.1">
    <property type="organism ID" value="13746"/>
</dbReference>
<dbReference type="Proteomes" id="UP000000799">
    <property type="component" value="Chromosome"/>
</dbReference>
<dbReference type="GO" id="GO:0016020">
    <property type="term" value="C:membrane"/>
    <property type="evidence" value="ECO:0007669"/>
    <property type="project" value="TreeGrafter"/>
</dbReference>
<dbReference type="GO" id="GO:0009325">
    <property type="term" value="C:nitrate reductase complex"/>
    <property type="evidence" value="ECO:0007669"/>
    <property type="project" value="TreeGrafter"/>
</dbReference>
<dbReference type="GO" id="GO:0042597">
    <property type="term" value="C:periplasmic space"/>
    <property type="evidence" value="ECO:0007669"/>
    <property type="project" value="UniProtKB-SubCell"/>
</dbReference>
<dbReference type="GO" id="GO:0051539">
    <property type="term" value="F:4 iron, 4 sulfur cluster binding"/>
    <property type="evidence" value="ECO:0007669"/>
    <property type="project" value="UniProtKB-KW"/>
</dbReference>
<dbReference type="GO" id="GO:0009055">
    <property type="term" value="F:electron transfer activity"/>
    <property type="evidence" value="ECO:0007669"/>
    <property type="project" value="UniProtKB-UniRule"/>
</dbReference>
<dbReference type="GO" id="GO:0005506">
    <property type="term" value="F:iron ion binding"/>
    <property type="evidence" value="ECO:0007669"/>
    <property type="project" value="UniProtKB-UniRule"/>
</dbReference>
<dbReference type="GO" id="GO:0030151">
    <property type="term" value="F:molybdenum ion binding"/>
    <property type="evidence" value="ECO:0007669"/>
    <property type="project" value="InterPro"/>
</dbReference>
<dbReference type="GO" id="GO:0043546">
    <property type="term" value="F:molybdopterin cofactor binding"/>
    <property type="evidence" value="ECO:0007669"/>
    <property type="project" value="InterPro"/>
</dbReference>
<dbReference type="GO" id="GO:0050140">
    <property type="term" value="F:nitrate reductase (cytochrome) activity"/>
    <property type="evidence" value="ECO:0007669"/>
    <property type="project" value="UniProtKB-EC"/>
</dbReference>
<dbReference type="GO" id="GO:0006777">
    <property type="term" value="P:Mo-molybdopterin cofactor biosynthetic process"/>
    <property type="evidence" value="ECO:0007669"/>
    <property type="project" value="UniProtKB-UniRule"/>
</dbReference>
<dbReference type="GO" id="GO:0042128">
    <property type="term" value="P:nitrate assimilation"/>
    <property type="evidence" value="ECO:0007669"/>
    <property type="project" value="UniProtKB-UniRule"/>
</dbReference>
<dbReference type="CDD" id="cd02791">
    <property type="entry name" value="MopB_CT_Nitrate-R-NapA-like"/>
    <property type="match status" value="1"/>
</dbReference>
<dbReference type="FunFam" id="2.40.40.20:FF:000005">
    <property type="entry name" value="Periplasmic nitrate reductase"/>
    <property type="match status" value="1"/>
</dbReference>
<dbReference type="Gene3D" id="2.40.40.20">
    <property type="match status" value="1"/>
</dbReference>
<dbReference type="Gene3D" id="3.30.200.210">
    <property type="match status" value="2"/>
</dbReference>
<dbReference type="Gene3D" id="3.40.50.740">
    <property type="match status" value="1"/>
</dbReference>
<dbReference type="Gene3D" id="3.40.228.10">
    <property type="entry name" value="Dimethylsulfoxide Reductase, domain 2"/>
    <property type="match status" value="1"/>
</dbReference>
<dbReference type="HAMAP" id="MF_01630">
    <property type="entry name" value="Nitrate_reduct_NapA"/>
    <property type="match status" value="1"/>
</dbReference>
<dbReference type="InterPro" id="IPR009010">
    <property type="entry name" value="Asp_de-COase-like_dom_sf"/>
</dbReference>
<dbReference type="InterPro" id="IPR041957">
    <property type="entry name" value="CT_Nitrate-R-NapA-like"/>
</dbReference>
<dbReference type="InterPro" id="IPR006657">
    <property type="entry name" value="MoPterin_dinucl-bd_dom"/>
</dbReference>
<dbReference type="InterPro" id="IPR006656">
    <property type="entry name" value="Mopterin_OxRdtase"/>
</dbReference>
<dbReference type="InterPro" id="IPR006963">
    <property type="entry name" value="Mopterin_OxRdtase_4Fe-4S_dom"/>
</dbReference>
<dbReference type="InterPro" id="IPR027467">
    <property type="entry name" value="MopterinOxRdtase_cofactor_BS"/>
</dbReference>
<dbReference type="InterPro" id="IPR010051">
    <property type="entry name" value="Periplasm_NO3_reductase_lsu"/>
</dbReference>
<dbReference type="InterPro" id="IPR050123">
    <property type="entry name" value="Prok_molybdopt-oxidoreductase"/>
</dbReference>
<dbReference type="InterPro" id="IPR019546">
    <property type="entry name" value="TAT_signal_bac_arc"/>
</dbReference>
<dbReference type="NCBIfam" id="TIGR01706">
    <property type="entry name" value="NAPA"/>
    <property type="match status" value="1"/>
</dbReference>
<dbReference type="NCBIfam" id="NF010055">
    <property type="entry name" value="PRK13532.1"/>
    <property type="match status" value="1"/>
</dbReference>
<dbReference type="NCBIfam" id="TIGR01409">
    <property type="entry name" value="TAT_signal_seq"/>
    <property type="match status" value="1"/>
</dbReference>
<dbReference type="PANTHER" id="PTHR43105:SF11">
    <property type="entry name" value="PERIPLASMIC NITRATE REDUCTASE"/>
    <property type="match status" value="1"/>
</dbReference>
<dbReference type="PANTHER" id="PTHR43105">
    <property type="entry name" value="RESPIRATORY NITRATE REDUCTASE"/>
    <property type="match status" value="1"/>
</dbReference>
<dbReference type="Pfam" id="PF04879">
    <property type="entry name" value="Molybdop_Fe4S4"/>
    <property type="match status" value="1"/>
</dbReference>
<dbReference type="Pfam" id="PF00384">
    <property type="entry name" value="Molybdopterin"/>
    <property type="match status" value="1"/>
</dbReference>
<dbReference type="Pfam" id="PF01568">
    <property type="entry name" value="Molydop_binding"/>
    <property type="match status" value="1"/>
</dbReference>
<dbReference type="SMART" id="SM00926">
    <property type="entry name" value="Molybdop_Fe4S4"/>
    <property type="match status" value="1"/>
</dbReference>
<dbReference type="SUPFAM" id="SSF50692">
    <property type="entry name" value="ADC-like"/>
    <property type="match status" value="1"/>
</dbReference>
<dbReference type="SUPFAM" id="SSF53706">
    <property type="entry name" value="Formate dehydrogenase/DMSO reductase, domains 1-3"/>
    <property type="match status" value="1"/>
</dbReference>
<dbReference type="PROSITE" id="PS51669">
    <property type="entry name" value="4FE4S_MOW_BIS_MGD"/>
    <property type="match status" value="1"/>
</dbReference>
<dbReference type="PROSITE" id="PS00551">
    <property type="entry name" value="MOLYBDOPTERIN_PROK_1"/>
    <property type="match status" value="1"/>
</dbReference>
<keyword id="KW-0004">4Fe-4S</keyword>
<keyword id="KW-0249">Electron transport</keyword>
<keyword id="KW-0408">Iron</keyword>
<keyword id="KW-0411">Iron-sulfur</keyword>
<keyword id="KW-0479">Metal-binding</keyword>
<keyword id="KW-0500">Molybdenum</keyword>
<keyword id="KW-0534">Nitrate assimilation</keyword>
<keyword id="KW-0560">Oxidoreductase</keyword>
<keyword id="KW-0574">Periplasm</keyword>
<keyword id="KW-1185">Reference proteome</keyword>
<keyword id="KW-0732">Signal</keyword>
<keyword id="KW-0813">Transport</keyword>
<organism>
    <name type="scientific">Campylobacter jejuni subsp. jejuni serotype O:2 (strain ATCC 700819 / NCTC 11168)</name>
    <dbReference type="NCBI Taxonomy" id="192222"/>
    <lineage>
        <taxon>Bacteria</taxon>
        <taxon>Pseudomonadati</taxon>
        <taxon>Campylobacterota</taxon>
        <taxon>Epsilonproteobacteria</taxon>
        <taxon>Campylobacterales</taxon>
        <taxon>Campylobacteraceae</taxon>
        <taxon>Campylobacter</taxon>
    </lineage>
</organism>
<feature type="signal peptide" description="Tat-type signal" evidence="1">
    <location>
        <begin position="1"/>
        <end position="30"/>
    </location>
</feature>
<feature type="chain" id="PRO_0000045980" description="Periplasmic nitrate reductase" evidence="1">
    <location>
        <begin position="31"/>
        <end position="924"/>
    </location>
</feature>
<feature type="domain" description="4Fe-4S Mo/W bis-MGD-type" evidence="1">
    <location>
        <begin position="35"/>
        <end position="91"/>
    </location>
</feature>
<feature type="binding site" evidence="1">
    <location>
        <position position="42"/>
    </location>
    <ligand>
        <name>[4Fe-4S] cluster</name>
        <dbReference type="ChEBI" id="CHEBI:49883"/>
    </ligand>
</feature>
<feature type="binding site" evidence="1">
    <location>
        <position position="45"/>
    </location>
    <ligand>
        <name>[4Fe-4S] cluster</name>
        <dbReference type="ChEBI" id="CHEBI:49883"/>
    </ligand>
</feature>
<feature type="binding site" evidence="1">
    <location>
        <position position="49"/>
    </location>
    <ligand>
        <name>[4Fe-4S] cluster</name>
        <dbReference type="ChEBI" id="CHEBI:49883"/>
    </ligand>
</feature>
<feature type="binding site" evidence="1">
    <location>
        <position position="77"/>
    </location>
    <ligand>
        <name>[4Fe-4S] cluster</name>
        <dbReference type="ChEBI" id="CHEBI:49883"/>
    </ligand>
</feature>
<feature type="binding site" evidence="1">
    <location>
        <position position="79"/>
    </location>
    <ligand>
        <name>Mo-bis(molybdopterin guanine dinucleotide)</name>
        <dbReference type="ChEBI" id="CHEBI:60539"/>
    </ligand>
</feature>
<feature type="binding site" evidence="1">
    <location>
        <position position="147"/>
    </location>
    <ligand>
        <name>Mo-bis(molybdopterin guanine dinucleotide)</name>
        <dbReference type="ChEBI" id="CHEBI:60539"/>
    </ligand>
</feature>
<feature type="binding site" evidence="1">
    <location>
        <position position="172"/>
    </location>
    <ligand>
        <name>Mo-bis(molybdopterin guanine dinucleotide)</name>
        <dbReference type="ChEBI" id="CHEBI:60539"/>
    </ligand>
</feature>
<feature type="binding site" evidence="1">
    <location>
        <position position="176"/>
    </location>
    <ligand>
        <name>Mo-bis(molybdopterin guanine dinucleotide)</name>
        <dbReference type="ChEBI" id="CHEBI:60539"/>
    </ligand>
</feature>
<feature type="binding site" evidence="1">
    <location>
        <begin position="209"/>
        <end position="216"/>
    </location>
    <ligand>
        <name>Mo-bis(molybdopterin guanine dinucleotide)</name>
        <dbReference type="ChEBI" id="CHEBI:60539"/>
    </ligand>
</feature>
<feature type="binding site" evidence="1">
    <location>
        <position position="417"/>
    </location>
    <ligand>
        <name>Mo-bis(molybdopterin guanine dinucleotide)</name>
        <dbReference type="ChEBI" id="CHEBI:60539"/>
    </ligand>
</feature>
<feature type="binding site" evidence="1">
    <location>
        <position position="421"/>
    </location>
    <ligand>
        <name>Mo-bis(molybdopterin guanine dinucleotide)</name>
        <dbReference type="ChEBI" id="CHEBI:60539"/>
    </ligand>
</feature>
<feature type="binding site" evidence="1">
    <location>
        <position position="527"/>
    </location>
    <ligand>
        <name>Mo-bis(molybdopterin guanine dinucleotide)</name>
        <dbReference type="ChEBI" id="CHEBI:60539"/>
    </ligand>
</feature>
<feature type="binding site" evidence="1">
    <location>
        <begin position="552"/>
        <end position="553"/>
    </location>
    <ligand>
        <name>Mo-bis(molybdopterin guanine dinucleotide)</name>
        <dbReference type="ChEBI" id="CHEBI:60539"/>
    </ligand>
</feature>
<feature type="binding site" evidence="1">
    <location>
        <position position="575"/>
    </location>
    <ligand>
        <name>Mo-bis(molybdopterin guanine dinucleotide)</name>
        <dbReference type="ChEBI" id="CHEBI:60539"/>
    </ligand>
</feature>
<feature type="binding site" evidence="1">
    <location>
        <position position="602"/>
    </location>
    <ligand>
        <name>Mo-bis(molybdopterin guanine dinucleotide)</name>
        <dbReference type="ChEBI" id="CHEBI:60539"/>
    </ligand>
</feature>
<feature type="binding site" evidence="1">
    <location>
        <begin position="814"/>
        <end position="823"/>
    </location>
    <ligand>
        <name>Mo-bis(molybdopterin guanine dinucleotide)</name>
        <dbReference type="ChEBI" id="CHEBI:60539"/>
    </ligand>
</feature>
<feature type="binding site" evidence="1">
    <location>
        <position position="890"/>
    </location>
    <ligand>
        <name>substrate</name>
    </ligand>
</feature>
<feature type="binding site" evidence="1">
    <location>
        <position position="898"/>
    </location>
    <ligand>
        <name>Mo-bis(molybdopterin guanine dinucleotide)</name>
        <dbReference type="ChEBI" id="CHEBI:60539"/>
    </ligand>
</feature>
<feature type="binding site" evidence="1">
    <location>
        <position position="915"/>
    </location>
    <ligand>
        <name>Mo-bis(molybdopterin guanine dinucleotide)</name>
        <dbReference type="ChEBI" id="CHEBI:60539"/>
    </ligand>
</feature>
<gene>
    <name evidence="1" type="primary">napA</name>
    <name type="ordered locus">Cj0780</name>
</gene>
<reference key="1">
    <citation type="journal article" date="2000" name="Nature">
        <title>The genome sequence of the food-borne pathogen Campylobacter jejuni reveals hypervariable sequences.</title>
        <authorList>
            <person name="Parkhill J."/>
            <person name="Wren B.W."/>
            <person name="Mungall K.L."/>
            <person name="Ketley J.M."/>
            <person name="Churcher C.M."/>
            <person name="Basham D."/>
            <person name="Chillingworth T."/>
            <person name="Davies R.M."/>
            <person name="Feltwell T."/>
            <person name="Holroyd S."/>
            <person name="Jagels K."/>
            <person name="Karlyshev A.V."/>
            <person name="Moule S."/>
            <person name="Pallen M.J."/>
            <person name="Penn C.W."/>
            <person name="Quail M.A."/>
            <person name="Rajandream M.A."/>
            <person name="Rutherford K.M."/>
            <person name="van Vliet A.H.M."/>
            <person name="Whitehead S."/>
            <person name="Barrell B.G."/>
        </authorList>
    </citation>
    <scope>NUCLEOTIDE SEQUENCE [LARGE SCALE GENOMIC DNA]</scope>
    <source>
        <strain>ATCC 700819 / NCTC 11168</strain>
    </source>
</reference>
<accession>Q9PPD9</accession>
<accession>Q0PAB0</accession>
<evidence type="ECO:0000255" key="1">
    <source>
        <dbReference type="HAMAP-Rule" id="MF_01630"/>
    </source>
</evidence>
<protein>
    <recommendedName>
        <fullName evidence="1">Periplasmic nitrate reductase</fullName>
        <ecNumber evidence="1">1.9.6.1</ecNumber>
    </recommendedName>
</protein>
<name>NAPA_CAMJE</name>
<comment type="function">
    <text evidence="1">Catalytic subunit of the periplasmic nitrate reductase complex NapAB. Receives electrons from NapB and catalyzes the reduction of nitrate to nitrite.</text>
</comment>
<comment type="catalytic activity">
    <reaction evidence="1">
        <text>2 Fe(II)-[cytochrome] + nitrate + 2 H(+) = 2 Fe(III)-[cytochrome] + nitrite + H2O</text>
        <dbReference type="Rhea" id="RHEA:12909"/>
        <dbReference type="Rhea" id="RHEA-COMP:11777"/>
        <dbReference type="Rhea" id="RHEA-COMP:11778"/>
        <dbReference type="ChEBI" id="CHEBI:15377"/>
        <dbReference type="ChEBI" id="CHEBI:15378"/>
        <dbReference type="ChEBI" id="CHEBI:16301"/>
        <dbReference type="ChEBI" id="CHEBI:17632"/>
        <dbReference type="ChEBI" id="CHEBI:29033"/>
        <dbReference type="ChEBI" id="CHEBI:29034"/>
        <dbReference type="EC" id="1.9.6.1"/>
    </reaction>
</comment>
<comment type="cofactor">
    <cofactor evidence="1">
        <name>[4Fe-4S] cluster</name>
        <dbReference type="ChEBI" id="CHEBI:49883"/>
    </cofactor>
    <text evidence="1">Binds 1 [4Fe-4S] cluster.</text>
</comment>
<comment type="cofactor">
    <cofactor evidence="1">
        <name>Mo-bis(molybdopterin guanine dinucleotide)</name>
        <dbReference type="ChEBI" id="CHEBI:60539"/>
    </cofactor>
    <text evidence="1">Binds 1 molybdenum-bis(molybdopterin guanine dinucleotide) (Mo-bis-MGD) cofactor per subunit.</text>
</comment>
<comment type="subunit">
    <text evidence="1">Component of the periplasmic nitrate reductase NapAB complex composed of NapA and NapB.</text>
</comment>
<comment type="subcellular location">
    <subcellularLocation>
        <location evidence="1">Periplasm</location>
    </subcellularLocation>
</comment>
<comment type="PTM">
    <text evidence="1">Predicted to be exported by the Tat system. The position of the signal peptide cleavage has not been experimentally proven.</text>
</comment>
<comment type="similarity">
    <text evidence="1">Belongs to the prokaryotic molybdopterin-containing oxidoreductase family. NasA/NapA/NarB subfamily.</text>
</comment>